<evidence type="ECO:0000250" key="1">
    <source>
        <dbReference type="UniProtKB" id="Q96XT2"/>
    </source>
</evidence>
<evidence type="ECO:0000269" key="2">
    <source>
    </source>
</evidence>
<evidence type="ECO:0000269" key="3">
    <source>
    </source>
</evidence>
<evidence type="ECO:0000269" key="4">
    <source>
    </source>
</evidence>
<evidence type="ECO:0000303" key="5">
    <source>
    </source>
</evidence>
<evidence type="ECO:0000303" key="6">
    <source>
    </source>
</evidence>
<evidence type="ECO:0000312" key="7">
    <source>
        <dbReference type="EMBL" id="BAA10898.1"/>
    </source>
</evidence>
<comment type="function">
    <text evidence="2 3 4">Catalyzes the coenzyme A-dependent oxidative decarboxylation of different 2-oxoacids such as 2-oxoglutarate, pyruvate and 2-oxobutyrate to form their CoA derivatives.</text>
</comment>
<comment type="catalytic activity">
    <reaction evidence="2 3 4">
        <text>a 2-oxocarboxylate + 2 oxidized [2Fe-2S]-[ferredoxin] + CoA = an acyl-CoA + 2 reduced [2Fe-2S]-[ferredoxin] + CO2 + H(+)</text>
        <dbReference type="Rhea" id="RHEA:42316"/>
        <dbReference type="Rhea" id="RHEA-COMP:10000"/>
        <dbReference type="Rhea" id="RHEA-COMP:10001"/>
        <dbReference type="ChEBI" id="CHEBI:15378"/>
        <dbReference type="ChEBI" id="CHEBI:16526"/>
        <dbReference type="ChEBI" id="CHEBI:33737"/>
        <dbReference type="ChEBI" id="CHEBI:33738"/>
        <dbReference type="ChEBI" id="CHEBI:35179"/>
        <dbReference type="ChEBI" id="CHEBI:57287"/>
        <dbReference type="ChEBI" id="CHEBI:58342"/>
        <dbReference type="EC" id="1.2.7.11"/>
    </reaction>
</comment>
<comment type="biophysicochemical properties">
    <kinetics>
        <KM evidence="4">250 uM for pyruvate (at pH 6.8 and 50 degrees Celsius)</KM>
        <KM evidence="3">280 uM for pyruvate</KM>
        <KM evidence="3">480 uM for 2-oxobutyrate</KM>
        <KM evidence="3 4">870 uM for 2-oxoglutarate (at pH 6.8 and 50 degrees Celsius)</KM>
        <Vmax evidence="4">86.0 umol/min/mg enzyme with 2-oxoglutarate as substrate (at pH 6.8 and 50 degrees Celsius)</Vmax>
        <Vmax evidence="3">30.0 umol/min/mg enzyme with pyruvate as substrate</Vmax>
        <Vmax evidence="3">28.0 umol/min/mg enzyme with 2-oxobutyrate as substrate</Vmax>
        <Vmax evidence="3">11.0 umol/min/mg enzyme with 2-oxoglutarate as substrate</Vmax>
        <text evidence="2">kcat is 51 sec(-1) for pyruvate as substrate (PubMed:11683888). kcat is 19 sec(-1) for 2-oxoglutarate as substrate (PubMed:11683888).</text>
    </kinetics>
    <phDependence>
        <text evidence="2">Optimum pH is 8.5.</text>
    </phDependence>
    <temperatureDependence>
        <text evidence="2">Optimum temperature is 90 degrees Celsius.</text>
    </temperatureDependence>
</comment>
<comment type="subunit">
    <text evidence="2 3 4">Heterodimer composed of an alpha and a beta subunit.</text>
</comment>
<comment type="subcellular location">
    <subcellularLocation>
        <location evidence="2 4">Cytoplasm</location>
    </subcellularLocation>
</comment>
<comment type="domain">
    <text evidence="4">The Tyr-Pro-Ile-Thr-Pro (YPITP) motif is important for the turnover of the reaction, presumably through its flexibility and mobility.</text>
</comment>
<accession>P72578</accession>
<reference key="1">
    <citation type="journal article" date="1996" name="J. Biochem.">
        <title>2-oxoacid:ferredoxin oxidoreductase from the thermoacidophilic archaeon, Sulfolobus sp. strain 7.</title>
        <authorList>
            <person name="Zhang Q."/>
            <person name="Iwasaki T."/>
            <person name="Wakagi T."/>
            <person name="Oshima T."/>
        </authorList>
    </citation>
    <scope>NUCLEOTIDE SEQUENCE [GENOMIC DNA]</scope>
    <scope>PROTEIN SEQUENCE OF 1-23</scope>
    <scope>FUNCTION</scope>
    <scope>CATALYTIC ACTIVITY</scope>
    <scope>BIOPHYSICOCHEMICAL PROPERTIES</scope>
    <scope>SUBCELLULAR LOCATION</scope>
    <scope>SUBUNIT</scope>
    <scope>SUBSTRATE SPECIFICITY</scope>
    <scope>REACTION MECHANISM</scope>
    <source>
        <strain evidence="7">7</strain>
    </source>
</reference>
<reference key="2">
    <citation type="journal article" date="2001" name="Eur. J. Biochem.">
        <title>Role of a highly conserved YPITP motif in 2-oxoacid:ferredoxin oxidoreductase: heterologous expression of the gene from Sulfolobus sp.strain 7, and characterization of the recombinant and variant enzymes.</title>
        <authorList>
            <person name="Fukuda E."/>
            <person name="Kino H."/>
            <person name="Matsuzawa H."/>
            <person name="Wakagi T."/>
        </authorList>
    </citation>
    <scope>FUNCTION</scope>
    <scope>CATALYTIC ACTIVITY</scope>
    <scope>BIOPHYSICOCHEMICAL PROPERTIES</scope>
    <scope>MUTAGENESIS OF TYR-253; PRO-254; ILE-255; THR-256 AND PRO-257</scope>
    <scope>SUBCELLULAR LOCATION</scope>
    <scope>SUBUNIT</scope>
    <scope>SUBSTRATE SPECIFICITY</scope>
    <source>
        <strain>7</strain>
    </source>
</reference>
<reference key="3">
    <citation type="journal article" date="2002" name="Biochim. Biophys. Acta">
        <title>Substrate recognition by 2-oxoacid:ferredoxin oxidoreductase from Sulfolobus sp. strain 7.</title>
        <authorList>
            <person name="Fukuda E."/>
            <person name="Wakagi T."/>
        </authorList>
    </citation>
    <scope>FUNCTION</scope>
    <scope>CATALYTIC ACTIVITY</scope>
    <scope>BIOPHYSICOCHEMICAL PROPERTIES</scope>
    <scope>MUTAGENESIS OF THR-256; ARG-344 AND THR-353</scope>
    <scope>SUBUNIT</scope>
    <scope>SUBSTRATE SPECIFICITY</scope>
</reference>
<keyword id="KW-0963">Cytoplasm</keyword>
<keyword id="KW-0903">Direct protein sequencing</keyword>
<keyword id="KW-0560">Oxidoreductase</keyword>
<keyword id="KW-0670">Pyruvate</keyword>
<organism>
    <name type="scientific">Sulfolobus sp</name>
    <dbReference type="NCBI Taxonomy" id="2288"/>
    <lineage>
        <taxon>Archaea</taxon>
        <taxon>Thermoproteota</taxon>
        <taxon>Thermoprotei</taxon>
        <taxon>Sulfolobales</taxon>
        <taxon>Sulfolobaceae</taxon>
        <taxon>Sulfolobus</taxon>
    </lineage>
</organism>
<dbReference type="EC" id="1.2.7.11" evidence="2 3 4"/>
<dbReference type="EMBL" id="D64024">
    <property type="protein sequence ID" value="BAA10898.1"/>
    <property type="molecule type" value="Genomic_DNA"/>
</dbReference>
<dbReference type="PIR" id="JC4919">
    <property type="entry name" value="JC4919"/>
</dbReference>
<dbReference type="SMR" id="P72578"/>
<dbReference type="KEGG" id="ag:BAA10898"/>
<dbReference type="BioCyc" id="MetaCyc:MONOMER-11911"/>
<dbReference type="BRENDA" id="1.2.7.11">
    <property type="organism ID" value="6164"/>
</dbReference>
<dbReference type="GO" id="GO:0005737">
    <property type="term" value="C:cytoplasm"/>
    <property type="evidence" value="ECO:0007669"/>
    <property type="project" value="UniProtKB-SubCell"/>
</dbReference>
<dbReference type="GO" id="GO:0018491">
    <property type="term" value="F:2-oxobutyrate synthase activity"/>
    <property type="evidence" value="ECO:0000314"/>
    <property type="project" value="UniProtKB"/>
</dbReference>
<dbReference type="GO" id="GO:0047553">
    <property type="term" value="F:2-oxoglutarate synthase activity"/>
    <property type="evidence" value="ECO:0000314"/>
    <property type="project" value="UniProtKB"/>
</dbReference>
<dbReference type="GO" id="GO:0019164">
    <property type="term" value="F:pyruvate synthase activity"/>
    <property type="evidence" value="ECO:0000314"/>
    <property type="project" value="UniProtKB"/>
</dbReference>
<dbReference type="GO" id="GO:0006979">
    <property type="term" value="P:response to oxidative stress"/>
    <property type="evidence" value="ECO:0007669"/>
    <property type="project" value="TreeGrafter"/>
</dbReference>
<dbReference type="CDD" id="cd07034">
    <property type="entry name" value="TPP_PYR_PFOR_IOR-alpha_like"/>
    <property type="match status" value="1"/>
</dbReference>
<dbReference type="FunFam" id="3.40.50.970:FF:000022">
    <property type="entry name" value="2-oxoglutarate ferredoxin oxidoreductase alpha subunit"/>
    <property type="match status" value="1"/>
</dbReference>
<dbReference type="FunFam" id="3.40.50.920:FF:000009">
    <property type="entry name" value="2-oxoglutarate ferredoxin oxidoreductase subunit alpha"/>
    <property type="match status" value="1"/>
</dbReference>
<dbReference type="Gene3D" id="3.40.50.920">
    <property type="match status" value="1"/>
</dbReference>
<dbReference type="Gene3D" id="3.40.50.970">
    <property type="match status" value="1"/>
</dbReference>
<dbReference type="Gene3D" id="3.40.920.10">
    <property type="entry name" value="Pyruvate-ferredoxin oxidoreductase, PFOR, domain III"/>
    <property type="match status" value="1"/>
</dbReference>
<dbReference type="InterPro" id="IPR022367">
    <property type="entry name" value="2-oxoacid/accept_OxRdtase_asu"/>
</dbReference>
<dbReference type="InterPro" id="IPR053400">
    <property type="entry name" value="2-oxoacid_Fdx_oxidoreductase"/>
</dbReference>
<dbReference type="InterPro" id="IPR050722">
    <property type="entry name" value="Pyruvate:ferred/Flavod_OxRd"/>
</dbReference>
<dbReference type="InterPro" id="IPR019752">
    <property type="entry name" value="Pyrv/ketoisovalerate_OxRed_cat"/>
</dbReference>
<dbReference type="InterPro" id="IPR002880">
    <property type="entry name" value="Pyrv_Fd/Flavodoxin_OxRdtase_N"/>
</dbReference>
<dbReference type="InterPro" id="IPR002869">
    <property type="entry name" value="Pyrv_flavodox_OxRed_cen"/>
</dbReference>
<dbReference type="InterPro" id="IPR029061">
    <property type="entry name" value="THDP-binding"/>
</dbReference>
<dbReference type="InterPro" id="IPR009014">
    <property type="entry name" value="Transketo_C/PFOR_II"/>
</dbReference>
<dbReference type="NCBIfam" id="TIGR03710">
    <property type="entry name" value="OAFO_sf"/>
    <property type="match status" value="1"/>
</dbReference>
<dbReference type="NCBIfam" id="NF041170">
    <property type="entry name" value="Oxoac_fdxalpha_Archa"/>
    <property type="match status" value="1"/>
</dbReference>
<dbReference type="PANTHER" id="PTHR32154:SF16">
    <property type="entry name" value="PYRUVATE FLAVODOXIN_FERREDOXIN OXIDOREDUCTASE DOMAIN PROTEIN"/>
    <property type="match status" value="1"/>
</dbReference>
<dbReference type="PANTHER" id="PTHR32154">
    <property type="entry name" value="PYRUVATE-FLAVODOXIN OXIDOREDUCTASE-RELATED"/>
    <property type="match status" value="1"/>
</dbReference>
<dbReference type="Pfam" id="PF01558">
    <property type="entry name" value="POR"/>
    <property type="match status" value="1"/>
</dbReference>
<dbReference type="Pfam" id="PF01855">
    <property type="entry name" value="POR_N"/>
    <property type="match status" value="1"/>
</dbReference>
<dbReference type="SUPFAM" id="SSF53323">
    <property type="entry name" value="Pyruvate-ferredoxin oxidoreductase, PFOR, domain III"/>
    <property type="match status" value="1"/>
</dbReference>
<dbReference type="SUPFAM" id="SSF52518">
    <property type="entry name" value="Thiamin diphosphate-binding fold (THDP-binding)"/>
    <property type="match status" value="1"/>
</dbReference>
<dbReference type="SUPFAM" id="SSF52922">
    <property type="entry name" value="TK C-terminal domain-like"/>
    <property type="match status" value="1"/>
</dbReference>
<proteinExistence type="evidence at protein level"/>
<feature type="chain" id="PRO_0000445529" description="2-oxoacid:ferredoxin oxidoreductase subunit alpha">
    <location>
        <begin position="1"/>
        <end position="632"/>
    </location>
</feature>
<feature type="short sequence motif" description="YPITP motif" evidence="2">
    <location>
        <begin position="253"/>
        <end position="257"/>
    </location>
</feature>
<feature type="binding site" evidence="1">
    <location>
        <position position="256"/>
    </location>
    <ligand>
        <name>substrate</name>
    </ligand>
</feature>
<feature type="binding site" evidence="1">
    <location>
        <position position="344"/>
    </location>
    <ligand>
        <name>substrate</name>
    </ligand>
</feature>
<feature type="site" description="Plays a key role in the broad substrate specificity" evidence="3">
    <location>
        <position position="353"/>
    </location>
</feature>
<feature type="mutagenesis site" description="Loss of oxidoreductase activity." evidence="2">
    <original>Y</original>
    <variation>A</variation>
    <variation>W</variation>
    <location>
        <position position="253"/>
    </location>
</feature>
<feature type="mutagenesis site" description="Significant decrease in the catalytic efficiency, while the affinity for 2-oxoacid is only slightly affected." evidence="2">
    <original>Y</original>
    <variation>F</variation>
    <location>
        <position position="253"/>
    </location>
</feature>
<feature type="mutagenesis site" description="Significant decrease in the catalytic efficiency, while the affinity for 2-oxoacid is only slightly affected." evidence="2">
    <original>P</original>
    <variation>G</variation>
    <location>
        <position position="254"/>
    </location>
</feature>
<feature type="mutagenesis site" description="Significant decrease in the catalytic efficiency, while the affinity for 2-oxoacid is only slightly affected." evidence="2">
    <original>I</original>
    <variation>L</variation>
    <variation>M</variation>
    <variation>S</variation>
    <variation>V</variation>
    <location>
        <position position="255"/>
    </location>
</feature>
<feature type="mutagenesis site" description="Significant decrease in the catalytic efficiency, while the affinity for 2-oxoacid is only slightly affected." evidence="2 3">
    <original>T</original>
    <variation>A</variation>
    <variation>S</variation>
    <variation>V</variation>
    <location>
        <position position="256"/>
    </location>
</feature>
<feature type="mutagenesis site" description="Loss of oxidoreductase activity." evidence="2">
    <original>P</original>
    <variation>A</variation>
    <variation>G</variation>
    <variation>V</variation>
    <location>
        <position position="257"/>
    </location>
</feature>
<feature type="mutagenesis site" description="Loss of oxidoreductase activity." evidence="3">
    <original>R</original>
    <variation>A</variation>
    <variation>K</variation>
    <location>
        <position position="344"/>
    </location>
</feature>
<feature type="mutagenesis site" description="Strong decrease of the oxidoreductase activity with pyruvate, 2-oxobutyrate and 2-oxoglutarate." evidence="3">
    <original>T</original>
    <variation>I</variation>
    <variation>V</variation>
    <location>
        <position position="353"/>
    </location>
</feature>
<sequence>MRLSWVIGGAQGTGIDTAANIFGNAVASAGYYIYGNREYYSNIKGGHSYFSLTISDKRVRSNTQKIDILVSFDAETVFQHFYDVKDILIYNKAVETTKIDAVQSMEPELAERIKDFLTKQGYETTVKGALEYASKNNVTLIPVNYDEIAKKVADEMKVPLSVTERVKNIVGITISYKLLGLDVNYLIEAINSTFKQDLYRKMNELAVKDSYDIVESRYNLKPSSKERRRFWLDGNTAVAIGKIYGGVRFQSYYPITPASDESVYIEAHQDVLMEDPITGDKKKGTIVVVQAEDELAAINMAIGAALTGVRAATATSGPGFSLMVEGLGWAGMNEVPVVITYYIRGGPSTGLPTRTAQSDLIFPIFAGHGEFPKIVLASGDHAEAFKDAIWALNLAEKYQTPVIHLVEKTLANSYSTIPYEELELDKLKAERGKIVESGDISYKRFKFTEDGISPRAFLGKATMYYTGDEHNEEGHISEDVVNRTMMYEKRMKKLEVADKEIPEESRVKIYGDLNSRNLIITWGSPTGVLRDILEESNFDFTLLQIRMFSPFPKNLVSKLMEGRDKIITVEGNYLAQTSLLVKMYTGKDVTNSILKWNGRPFLRDELEEALIKVIKDGEKRVVLNGGIYTSME</sequence>
<protein>
    <recommendedName>
        <fullName evidence="6">2-oxoacid:ferredoxin oxidoreductase subunit alpha</fullName>
        <shortName evidence="5">OFOR</shortName>
        <ecNumber evidence="2 3 4">1.2.7.11</ecNumber>
    </recommendedName>
</protein>
<name>OFOA_SULSP</name>